<sequence length="345" mass="34709">MGKPGFSPRGGGGGGGGGGGGFRGRGGGGGGGGGGGFGGGRGRGGGGDRGGRGGFGGGRGGGGRGGGGGGGRGGFGGRGGGGGRGGGGRGGGGRGGGGRGGGAGGFKGGKTVTIEPHRHEGVFIARGKEDALVTRNFVPGSEVYGEKRISVENNGEKIEYRVWNPFRSKLAAAVLGGVEQIHMPPGSKVLYLGAASGTTVSHVSDVVGPEGLVYAVEFSHRSGRDLINVAKKRTNIIPIIEDARHPHKYRMLVGMVDTIFADVAQPDQGRIVALNAQHFLKNGGHFVISIKASCIDSTAQPEAVFASEVKKMQADKLKPQEQLTLEPYERDHAVVVGVYRPPPKQ</sequence>
<gene>
    <name evidence="5" type="primary">Fib</name>
    <name type="ORF">GG20072</name>
</gene>
<dbReference type="EC" id="2.1.1.-"/>
<dbReference type="EMBL" id="AY190941">
    <property type="protein sequence ID" value="AAO01021.1"/>
    <property type="molecule type" value="Genomic_DNA"/>
</dbReference>
<dbReference type="EMBL" id="CH954179">
    <property type="protein sequence ID" value="EDV56741.1"/>
    <property type="molecule type" value="Genomic_DNA"/>
</dbReference>
<dbReference type="SMR" id="Q8I1F4"/>
<dbReference type="EnsemblMetazoa" id="FBtr0140126">
    <property type="protein sequence ID" value="FBpp0138618"/>
    <property type="gene ID" value="FBgn0064623"/>
</dbReference>
<dbReference type="EnsemblMetazoa" id="XM_001976305.3">
    <property type="protein sequence ID" value="XP_001976341.1"/>
    <property type="gene ID" value="LOC6547316"/>
</dbReference>
<dbReference type="GeneID" id="6547316"/>
<dbReference type="KEGG" id="der:6547316"/>
<dbReference type="CTD" id="37662"/>
<dbReference type="eggNOG" id="KOG1596">
    <property type="taxonomic scope" value="Eukaryota"/>
</dbReference>
<dbReference type="HOGENOM" id="CLU_059055_1_0_1"/>
<dbReference type="OMA" id="WNPNKSK"/>
<dbReference type="OrthoDB" id="1859733at2759"/>
<dbReference type="PhylomeDB" id="Q8I1F4"/>
<dbReference type="Proteomes" id="UP000008711">
    <property type="component" value="Unassembled WGS sequence"/>
</dbReference>
<dbReference type="GO" id="GO:0031428">
    <property type="term" value="C:box C/D methylation guide snoRNP complex"/>
    <property type="evidence" value="ECO:0007669"/>
    <property type="project" value="TreeGrafter"/>
</dbReference>
<dbReference type="GO" id="GO:0015030">
    <property type="term" value="C:Cajal body"/>
    <property type="evidence" value="ECO:0007669"/>
    <property type="project" value="TreeGrafter"/>
</dbReference>
<dbReference type="GO" id="GO:0001651">
    <property type="term" value="C:dense fibrillar component"/>
    <property type="evidence" value="ECO:0000250"/>
    <property type="project" value="UniProtKB"/>
</dbReference>
<dbReference type="GO" id="GO:0032040">
    <property type="term" value="C:small-subunit processome"/>
    <property type="evidence" value="ECO:0007669"/>
    <property type="project" value="TreeGrafter"/>
</dbReference>
<dbReference type="GO" id="GO:1990259">
    <property type="term" value="F:histone H2AQ104 methyltransferase activity"/>
    <property type="evidence" value="ECO:0007669"/>
    <property type="project" value="TreeGrafter"/>
</dbReference>
<dbReference type="GO" id="GO:0003723">
    <property type="term" value="F:RNA binding"/>
    <property type="evidence" value="ECO:0007669"/>
    <property type="project" value="UniProtKB-KW"/>
</dbReference>
<dbReference type="GO" id="GO:0008649">
    <property type="term" value="F:rRNA methyltransferase activity"/>
    <property type="evidence" value="ECO:0007669"/>
    <property type="project" value="TreeGrafter"/>
</dbReference>
<dbReference type="GO" id="GO:0000494">
    <property type="term" value="P:box C/D sno(s)RNA 3'-end processing"/>
    <property type="evidence" value="ECO:0007669"/>
    <property type="project" value="TreeGrafter"/>
</dbReference>
<dbReference type="FunFam" id="3.30.200.20:FF:000056">
    <property type="entry name" value="Fibrillarin like 1"/>
    <property type="match status" value="1"/>
</dbReference>
<dbReference type="FunFam" id="3.40.50.150:FF:000001">
    <property type="entry name" value="Fibrillarin like 1"/>
    <property type="match status" value="1"/>
</dbReference>
<dbReference type="Gene3D" id="3.30.200.20">
    <property type="entry name" value="Phosphorylase Kinase, domain 1"/>
    <property type="match status" value="1"/>
</dbReference>
<dbReference type="Gene3D" id="3.40.50.150">
    <property type="entry name" value="Vaccinia Virus protein VP39"/>
    <property type="match status" value="1"/>
</dbReference>
<dbReference type="HAMAP" id="MF_00351">
    <property type="entry name" value="RNA_methyltransf_FlpA"/>
    <property type="match status" value="1"/>
</dbReference>
<dbReference type="InterPro" id="IPR000692">
    <property type="entry name" value="Fibrillarin"/>
</dbReference>
<dbReference type="InterPro" id="IPR020813">
    <property type="entry name" value="Fibrillarin_CS"/>
</dbReference>
<dbReference type="InterPro" id="IPR029063">
    <property type="entry name" value="SAM-dependent_MTases_sf"/>
</dbReference>
<dbReference type="NCBIfam" id="NF003276">
    <property type="entry name" value="PRK04266.1-2"/>
    <property type="match status" value="1"/>
</dbReference>
<dbReference type="PANTHER" id="PTHR10335:SF17">
    <property type="entry name" value="FIBRILLARIN"/>
    <property type="match status" value="1"/>
</dbReference>
<dbReference type="PANTHER" id="PTHR10335">
    <property type="entry name" value="RRNA 2-O-METHYLTRANSFERASE FIBRILLARIN"/>
    <property type="match status" value="1"/>
</dbReference>
<dbReference type="Pfam" id="PF01269">
    <property type="entry name" value="Fibrillarin"/>
    <property type="match status" value="1"/>
</dbReference>
<dbReference type="PRINTS" id="PR00052">
    <property type="entry name" value="FIBRILLARIN"/>
</dbReference>
<dbReference type="SMART" id="SM01206">
    <property type="entry name" value="Fibrillarin"/>
    <property type="match status" value="1"/>
</dbReference>
<dbReference type="SUPFAM" id="SSF53335">
    <property type="entry name" value="S-adenosyl-L-methionine-dependent methyltransferases"/>
    <property type="match status" value="1"/>
</dbReference>
<dbReference type="PROSITE" id="PS00566">
    <property type="entry name" value="FIBRILLARIN"/>
    <property type="match status" value="1"/>
</dbReference>
<protein>
    <recommendedName>
        <fullName>rRNA 2'-O-methyltransferase fibrillarin</fullName>
        <ecNumber>2.1.1.-</ecNumber>
    </recommendedName>
    <alternativeName>
        <fullName>Histone-glutamine methyltransferase</fullName>
    </alternativeName>
</protein>
<reference evidence="5" key="1">
    <citation type="journal article" date="2002" name="Genome Biol.">
        <title>Assessing the impact of comparative genomic sequence data on the functional annotation of the Drosophila genome.</title>
        <authorList>
            <person name="Bergman C.M."/>
            <person name="Pfeiffer B.D."/>
            <person name="Rincon-Limas D.E."/>
            <person name="Hoskins R.A."/>
            <person name="Gnirke A."/>
            <person name="Mungall C.J."/>
            <person name="Wang A.M."/>
            <person name="Kronmiller B."/>
            <person name="Pacleb J.M."/>
            <person name="Park S."/>
            <person name="Stapleton M."/>
            <person name="Wan K.H."/>
            <person name="George R.A."/>
            <person name="de Jong P.J."/>
            <person name="Botas J."/>
            <person name="Rubin G.M."/>
            <person name="Celniker S.E."/>
        </authorList>
    </citation>
    <scope>NUCLEOTIDE SEQUENCE [GENOMIC DNA]</scope>
</reference>
<reference key="2">
    <citation type="journal article" date="2007" name="Nature">
        <title>Evolution of genes and genomes on the Drosophila phylogeny.</title>
        <authorList>
            <consortium name="Drosophila 12 genomes consortium"/>
        </authorList>
    </citation>
    <scope>NUCLEOTIDE SEQUENCE [LARGE SCALE GENOMIC DNA]</scope>
    <source>
        <strain>Tucson 14021-0224.01</strain>
    </source>
</reference>
<comment type="function">
    <text evidence="1">S-adenosyl-L-methionine-dependent methyltransferase that has the ability to methylate both RNAs and proteins. Involved in pre-rRNA processing. Utilizes the methyl donor S-adenosyl-L-methionine to catalyze the site-specific 2'-hydroxyl methylation of ribose moieties in pre-ribosomal RNA. Site specificity is provided by a guide RNA that base pairs with the substrate. Methylation occurs at a characteristic distance from the sequence involved in base pairing with the guide RNA. Also acts as a protein methyltransferase by mediating methylation of 'Gln-105' of histone H2A (H2AQ105me), a modification that impairs binding of the FACT complex and is specifically present at 35S ribosomal DNA locus (By similarity).</text>
</comment>
<comment type="catalytic activity">
    <reaction>
        <text>L-glutaminyl-[histone H2A] + S-adenosyl-L-methionine = N(5)-methyl-L-glutaminyl-[histone H2A] + S-adenosyl-L-homocysteine + H(+)</text>
        <dbReference type="Rhea" id="RHEA:50904"/>
        <dbReference type="Rhea" id="RHEA-COMP:12837"/>
        <dbReference type="Rhea" id="RHEA-COMP:12839"/>
        <dbReference type="ChEBI" id="CHEBI:15378"/>
        <dbReference type="ChEBI" id="CHEBI:30011"/>
        <dbReference type="ChEBI" id="CHEBI:57856"/>
        <dbReference type="ChEBI" id="CHEBI:59789"/>
        <dbReference type="ChEBI" id="CHEBI:61891"/>
    </reaction>
</comment>
<comment type="subunit">
    <text evidence="1">Component of box C/D small nucleolar ribonucleoprotein (snoRNP) particles. It is associated with the U3, U8 and U13 small nuclear RNAs.</text>
</comment>
<comment type="subcellular location">
    <subcellularLocation>
        <location evidence="1">Nucleus</location>
        <location evidence="1">Nucleolus</location>
    </subcellularLocation>
    <text evidence="1">Fibrillar region of the nucleolus.</text>
</comment>
<comment type="PTM">
    <text evidence="2">By homology to other fibrillarins, some or all of the N-terminal domain arginines are modified to asymmetric dimethylarginine (DMA).</text>
</comment>
<comment type="similarity">
    <text evidence="4">Belongs to the methyltransferase superfamily. Fibrillarin family.</text>
</comment>
<organism>
    <name type="scientific">Drosophila erecta</name>
    <name type="common">Fruit fly</name>
    <dbReference type="NCBI Taxonomy" id="7220"/>
    <lineage>
        <taxon>Eukaryota</taxon>
        <taxon>Metazoa</taxon>
        <taxon>Ecdysozoa</taxon>
        <taxon>Arthropoda</taxon>
        <taxon>Hexapoda</taxon>
        <taxon>Insecta</taxon>
        <taxon>Pterygota</taxon>
        <taxon>Neoptera</taxon>
        <taxon>Endopterygota</taxon>
        <taxon>Diptera</taxon>
        <taxon>Brachycera</taxon>
        <taxon>Muscomorpha</taxon>
        <taxon>Ephydroidea</taxon>
        <taxon>Drosophilidae</taxon>
        <taxon>Drosophila</taxon>
        <taxon>Sophophora</taxon>
    </lineage>
</organism>
<evidence type="ECO:0000250" key="1"/>
<evidence type="ECO:0000250" key="2">
    <source>
        <dbReference type="UniProtKB" id="P22509"/>
    </source>
</evidence>
<evidence type="ECO:0000256" key="3">
    <source>
        <dbReference type="SAM" id="MobiDB-lite"/>
    </source>
</evidence>
<evidence type="ECO:0000305" key="4"/>
<evidence type="ECO:0000312" key="5">
    <source>
        <dbReference type="EMBL" id="AAO01021.1"/>
    </source>
</evidence>
<accession>Q8I1F4</accession>
<accession>B3NP08</accession>
<feature type="chain" id="PRO_0000148512" description="rRNA 2'-O-methyltransferase fibrillarin">
    <location>
        <begin position="1"/>
        <end position="345"/>
    </location>
</feature>
<feature type="region of interest" description="Disordered" evidence="3">
    <location>
        <begin position="1"/>
        <end position="114"/>
    </location>
</feature>
<feature type="compositionally biased region" description="Gly residues" evidence="3">
    <location>
        <begin position="8"/>
        <end position="108"/>
    </location>
</feature>
<feature type="binding site" evidence="1">
    <location>
        <begin position="198"/>
        <end position="199"/>
    </location>
    <ligand>
        <name>S-adenosyl-L-methionine</name>
        <dbReference type="ChEBI" id="CHEBI:59789"/>
    </ligand>
</feature>
<feature type="binding site" evidence="1">
    <location>
        <begin position="217"/>
        <end position="218"/>
    </location>
    <ligand>
        <name>S-adenosyl-L-methionine</name>
        <dbReference type="ChEBI" id="CHEBI:59789"/>
    </ligand>
</feature>
<feature type="binding site" evidence="1">
    <location>
        <begin position="242"/>
        <end position="243"/>
    </location>
    <ligand>
        <name>S-adenosyl-L-methionine</name>
        <dbReference type="ChEBI" id="CHEBI:59789"/>
    </ligand>
</feature>
<feature type="binding site" evidence="1">
    <location>
        <begin position="262"/>
        <end position="265"/>
    </location>
    <ligand>
        <name>S-adenosyl-L-methionine</name>
        <dbReference type="ChEBI" id="CHEBI:59789"/>
    </ligand>
</feature>
<feature type="modified residue" description="Asymmetric dimethylarginine" evidence="2">
    <location>
        <position position="9"/>
    </location>
</feature>
<feature type="modified residue" description="Asymmetric dimethylarginine" evidence="2">
    <location>
        <position position="23"/>
    </location>
</feature>
<feature type="modified residue" description="Asymmetric dimethylarginine" evidence="2">
    <location>
        <position position="25"/>
    </location>
</feature>
<feature type="modified residue" description="Asymmetric dimethylarginine" evidence="2">
    <location>
        <position position="41"/>
    </location>
</feature>
<feature type="modified residue" description="Asymmetric dimethylarginine" evidence="2">
    <location>
        <position position="43"/>
    </location>
</feature>
<feature type="modified residue" description="Asymmetric dimethylarginine" evidence="2">
    <location>
        <position position="49"/>
    </location>
</feature>
<feature type="modified residue" description="Asymmetric dimethylarginine" evidence="2">
    <location>
        <position position="52"/>
    </location>
</feature>
<feature type="modified residue" description="Asymmetric dimethylarginine" evidence="2">
    <location>
        <position position="59"/>
    </location>
</feature>
<feature type="modified residue" description="Asymmetric dimethylarginine" evidence="2">
    <location>
        <position position="64"/>
    </location>
</feature>
<feature type="modified residue" description="Asymmetric dimethylarginine" evidence="2">
    <location>
        <position position="72"/>
    </location>
</feature>
<feature type="modified residue" description="Asymmetric dimethylarginine" evidence="2">
    <location>
        <position position="78"/>
    </location>
</feature>
<feature type="modified residue" description="Asymmetric dimethylarginine" evidence="2">
    <location>
        <position position="84"/>
    </location>
</feature>
<feature type="modified residue" description="Asymmetric dimethylarginine" evidence="2">
    <location>
        <position position="89"/>
    </location>
</feature>
<feature type="modified residue" description="Asymmetric dimethylarginine" evidence="2">
    <location>
        <position position="94"/>
    </location>
</feature>
<feature type="modified residue" description="Asymmetric dimethylarginine" evidence="2">
    <location>
        <position position="99"/>
    </location>
</feature>
<name>FBRL_DROER</name>
<keyword id="KW-0488">Methylation</keyword>
<keyword id="KW-0489">Methyltransferase</keyword>
<keyword id="KW-0539">Nucleus</keyword>
<keyword id="KW-0687">Ribonucleoprotein</keyword>
<keyword id="KW-0694">RNA-binding</keyword>
<keyword id="KW-0698">rRNA processing</keyword>
<keyword id="KW-0949">S-adenosyl-L-methionine</keyword>
<keyword id="KW-0808">Transferase</keyword>
<proteinExistence type="inferred from homology"/>